<gene>
    <name evidence="1" type="primary">cbiD</name>
    <name type="ordered locus">CA_C1377</name>
</gene>
<feature type="chain" id="PRO_0000141661" description="Cobalt-precorrin-5B C(1)-methyltransferase">
    <location>
        <begin position="1"/>
        <end position="361"/>
    </location>
</feature>
<keyword id="KW-0169">Cobalamin biosynthesis</keyword>
<keyword id="KW-0489">Methyltransferase</keyword>
<keyword id="KW-1185">Reference proteome</keyword>
<keyword id="KW-0949">S-adenosyl-L-methionine</keyword>
<keyword id="KW-0808">Transferase</keyword>
<proteinExistence type="inferred from homology"/>
<protein>
    <recommendedName>
        <fullName evidence="1">Cobalt-precorrin-5B C(1)-methyltransferase</fullName>
        <ecNumber evidence="1">2.1.1.195</ecNumber>
    </recommendedName>
    <alternativeName>
        <fullName evidence="1">Cobalt-precorrin-6A synthase</fullName>
    </alternativeName>
</protein>
<accession>Q97JA9</accession>
<comment type="function">
    <text evidence="1">Catalyzes the methylation of C-1 in cobalt-precorrin-5B to form cobalt-precorrin-6A.</text>
</comment>
<comment type="catalytic activity">
    <reaction evidence="1">
        <text>Co-precorrin-5B + S-adenosyl-L-methionine = Co-precorrin-6A + S-adenosyl-L-homocysteine</text>
        <dbReference type="Rhea" id="RHEA:26285"/>
        <dbReference type="ChEBI" id="CHEBI:57856"/>
        <dbReference type="ChEBI" id="CHEBI:59789"/>
        <dbReference type="ChEBI" id="CHEBI:60063"/>
        <dbReference type="ChEBI" id="CHEBI:60064"/>
        <dbReference type="EC" id="2.1.1.195"/>
    </reaction>
</comment>
<comment type="pathway">
    <text evidence="1">Cofactor biosynthesis; adenosylcobalamin biosynthesis; cob(II)yrinate a,c-diamide from sirohydrochlorin (anaerobic route): step 6/10.</text>
</comment>
<comment type="similarity">
    <text evidence="1">Belongs to the CbiD family.</text>
</comment>
<evidence type="ECO:0000255" key="1">
    <source>
        <dbReference type="HAMAP-Rule" id="MF_00787"/>
    </source>
</evidence>
<name>CBID_CLOAB</name>
<dbReference type="EC" id="2.1.1.195" evidence="1"/>
<dbReference type="EMBL" id="AE001437">
    <property type="protein sequence ID" value="AAK79345.1"/>
    <property type="molecule type" value="Genomic_DNA"/>
</dbReference>
<dbReference type="PIR" id="F97069">
    <property type="entry name" value="F97069"/>
</dbReference>
<dbReference type="RefSeq" id="NP_348005.1">
    <property type="nucleotide sequence ID" value="NC_003030.1"/>
</dbReference>
<dbReference type="RefSeq" id="WP_010964686.1">
    <property type="nucleotide sequence ID" value="NC_003030.1"/>
</dbReference>
<dbReference type="SMR" id="Q97JA9"/>
<dbReference type="STRING" id="272562.CA_C1377"/>
<dbReference type="GeneID" id="44997882"/>
<dbReference type="KEGG" id="cac:CA_C1377"/>
<dbReference type="PATRIC" id="fig|272562.8.peg.1582"/>
<dbReference type="eggNOG" id="COG1903">
    <property type="taxonomic scope" value="Bacteria"/>
</dbReference>
<dbReference type="HOGENOM" id="CLU_041273_1_0_9"/>
<dbReference type="OrthoDB" id="6439987at2"/>
<dbReference type="UniPathway" id="UPA00148">
    <property type="reaction ID" value="UER00227"/>
</dbReference>
<dbReference type="Proteomes" id="UP000000814">
    <property type="component" value="Chromosome"/>
</dbReference>
<dbReference type="GO" id="GO:0043780">
    <property type="term" value="F:cobalt-precorrin-5B C1-methyltransferase activity"/>
    <property type="evidence" value="ECO:0007669"/>
    <property type="project" value="RHEA"/>
</dbReference>
<dbReference type="GO" id="GO:0019251">
    <property type="term" value="P:anaerobic cobalamin biosynthetic process"/>
    <property type="evidence" value="ECO:0007669"/>
    <property type="project" value="UniProtKB-UniRule"/>
</dbReference>
<dbReference type="GO" id="GO:0032259">
    <property type="term" value="P:methylation"/>
    <property type="evidence" value="ECO:0007669"/>
    <property type="project" value="UniProtKB-KW"/>
</dbReference>
<dbReference type="Gene3D" id="3.30.2110.10">
    <property type="entry name" value="CbiD-like"/>
    <property type="match status" value="1"/>
</dbReference>
<dbReference type="HAMAP" id="MF_00787">
    <property type="entry name" value="CbiD"/>
    <property type="match status" value="1"/>
</dbReference>
<dbReference type="InterPro" id="IPR002748">
    <property type="entry name" value="CbiD"/>
</dbReference>
<dbReference type="InterPro" id="IPR036074">
    <property type="entry name" value="CbiD_sf"/>
</dbReference>
<dbReference type="NCBIfam" id="TIGR00312">
    <property type="entry name" value="cbiD"/>
    <property type="match status" value="1"/>
</dbReference>
<dbReference type="PANTHER" id="PTHR35863">
    <property type="entry name" value="COBALT-PRECORRIN-5B C(1)-METHYLTRANSFERASE"/>
    <property type="match status" value="1"/>
</dbReference>
<dbReference type="PANTHER" id="PTHR35863:SF1">
    <property type="entry name" value="COBALT-PRECORRIN-5B C(1)-METHYLTRANSFERASE"/>
    <property type="match status" value="1"/>
</dbReference>
<dbReference type="Pfam" id="PF01888">
    <property type="entry name" value="CbiD"/>
    <property type="match status" value="1"/>
</dbReference>
<dbReference type="PIRSF" id="PIRSF026782">
    <property type="entry name" value="CbiD"/>
    <property type="match status" value="1"/>
</dbReference>
<dbReference type="SUPFAM" id="SSF111342">
    <property type="entry name" value="CbiD-like"/>
    <property type="match status" value="1"/>
</dbReference>
<organism>
    <name type="scientific">Clostridium acetobutylicum (strain ATCC 824 / DSM 792 / JCM 1419 / IAM 19013 / LMG 5710 / NBRC 13948 / NRRL B-527 / VKM B-1787 / 2291 / W)</name>
    <dbReference type="NCBI Taxonomy" id="272562"/>
    <lineage>
        <taxon>Bacteria</taxon>
        <taxon>Bacillati</taxon>
        <taxon>Bacillota</taxon>
        <taxon>Clostridia</taxon>
        <taxon>Eubacteriales</taxon>
        <taxon>Clostridiaceae</taxon>
        <taxon>Clostridium</taxon>
    </lineage>
</organism>
<sequence>MLEMYVNCDGKKLRCGYTTGSCAAGAAKAATYMLYNEEILDLIKIDTPKGIELMLPIENIKKGDGFVECSIIKDGGDDPDITNGIEIWARAEVKKEGYTLKGGIGVGIVKSEGLYVEKGDYAINPVPRLMIEKEVKKVLPKDNGVLITVFVPKGEEIAKKTFNPRLNIVGGISILGTTGIVVPMSEEALQQSIKLEMNQKIKSGIKNFTFLFGNMGEDKAKEMGIDPKGFVIMSNYVGFALNCCRENNIKKILMVGHIGKMCKIAAGCFNTHSRVCGVRLEILALELALMGADTNFIEKIYREKTTEGAVKIIGKEYKDIYRRIGVKIMKKIKDFTYGEVNADIVLYSMEKGILWDSREVI</sequence>
<reference key="1">
    <citation type="journal article" date="2001" name="J. Bacteriol.">
        <title>Genome sequence and comparative analysis of the solvent-producing bacterium Clostridium acetobutylicum.</title>
        <authorList>
            <person name="Noelling J."/>
            <person name="Breton G."/>
            <person name="Omelchenko M.V."/>
            <person name="Makarova K.S."/>
            <person name="Zeng Q."/>
            <person name="Gibson R."/>
            <person name="Lee H.M."/>
            <person name="Dubois J."/>
            <person name="Qiu D."/>
            <person name="Hitti J."/>
            <person name="Wolf Y.I."/>
            <person name="Tatusov R.L."/>
            <person name="Sabathe F."/>
            <person name="Doucette-Stamm L.A."/>
            <person name="Soucaille P."/>
            <person name="Daly M.J."/>
            <person name="Bennett G.N."/>
            <person name="Koonin E.V."/>
            <person name="Smith D.R."/>
        </authorList>
    </citation>
    <scope>NUCLEOTIDE SEQUENCE [LARGE SCALE GENOMIC DNA]</scope>
    <source>
        <strain>ATCC 824 / DSM 792 / JCM 1419 / IAM 19013 / LMG 5710 / NBRC 13948 / NRRL B-527 / VKM B-1787 / 2291 / W</strain>
    </source>
</reference>